<proteinExistence type="evidence at protein level"/>
<comment type="function">
    <text evidence="1">Escorts unspliced or incompletely spliced viral pre-mRNAs (late transcripts) out of the nucleus of infected cells. These pre-mRNAs carry a recognition sequence called Rev responsive element (RRE) located in the env gene, that is not present in fully spliced viral mRNAs (early transcripts). This function is essential since most viral proteins are translated from unspliced or partially spliced pre-mRNAs which cannot exit the nucleus by the pathway used by fully processed cellular mRNAs (By similarity).</text>
</comment>
<comment type="subunit">
    <text evidence="1">Homomultimer; when bound to the RRE. Multimeric assembly is essential for activity (By similarity).</text>
</comment>
<comment type="subcellular location">
    <subcellularLocation>
        <location evidence="1">Host nucleus</location>
        <location evidence="1">Host nucleolus</location>
    </subcellularLocation>
    <subcellularLocation>
        <location evidence="1">Host cytoplasm</location>
    </subcellularLocation>
    <text evidence="1">The presence of both nuclear import and nuclear export signals leads to continuous shuttling between the nucleus and cytoplasm.</text>
</comment>
<comment type="domain">
    <text evidence="1">The RNA-binding motif binds to the RRE present in incompletely spliced viral pre-mRNAs. This region also contains the NLS which mediates nuclear localization. These overlapping functions prevent Rev bound to RRE from undesirable return to the nucleus. When Rev binds the RRE, the NLS becomes masked while the NES remains accessible (By similarity).</text>
</comment>
<comment type="PTM">
    <text evidence="4">Phosphorylated.</text>
</comment>
<comment type="miscellaneous">
    <text>The sequence shown is that of isolate R29-127.</text>
</comment>
<accession>P24097</accession>
<accession>Q04143</accession>
<accession>Q65598</accession>
<name>REV_BIV29</name>
<dbReference type="EMBL" id="M32690">
    <property type="status" value="NOT_ANNOTATED_CDS"/>
    <property type="molecule type" value="Genomic_RNA"/>
</dbReference>
<dbReference type="EMBL" id="M74712">
    <property type="protein sequence ID" value="AAA42772.1"/>
    <property type="molecule type" value="mRNA"/>
</dbReference>
<dbReference type="EMBL" id="L06504">
    <property type="protein sequence ID" value="AAA42774.1"/>
    <property type="molecule type" value="mRNA"/>
</dbReference>
<dbReference type="PIR" id="H34742">
    <property type="entry name" value="VKLJBT"/>
</dbReference>
<dbReference type="SMR" id="P24097"/>
<dbReference type="Proteomes" id="UP000243495">
    <property type="component" value="Segment"/>
</dbReference>
<dbReference type="GO" id="GO:0030430">
    <property type="term" value="C:host cell cytoplasm"/>
    <property type="evidence" value="ECO:0007669"/>
    <property type="project" value="UniProtKB-SubCell"/>
</dbReference>
<dbReference type="GO" id="GO:0044196">
    <property type="term" value="C:host cell nucleolus"/>
    <property type="evidence" value="ECO:0007669"/>
    <property type="project" value="UniProtKB-SubCell"/>
</dbReference>
<dbReference type="GO" id="GO:0003723">
    <property type="term" value="F:RNA binding"/>
    <property type="evidence" value="ECO:0007669"/>
    <property type="project" value="UniProtKB-KW"/>
</dbReference>
<dbReference type="GO" id="GO:0051028">
    <property type="term" value="P:mRNA transport"/>
    <property type="evidence" value="ECO:0007669"/>
    <property type="project" value="UniProtKB-KW"/>
</dbReference>
<dbReference type="Pfam" id="PF05858">
    <property type="entry name" value="BIV_Env"/>
    <property type="match status" value="1"/>
</dbReference>
<protein>
    <recommendedName>
        <fullName>Protein Rev</fullName>
    </recommendedName>
</protein>
<sequence length="186" mass="20844">MDQDLDRAERGERGGGSEELLQEEINEGRLTAREALQTWINNDSPRYVKKLRQGQPELPTSPGGGGGRGHRARKLPGERRPGFWKSLRELVEQNRRKQERRLSGLDRRIQQLEDLVRHMSLGSPDPSTPSASVLSVNPPAQTPLGHLPPRSYFKLKRVDCGAGWDLRTTAAPGLPICELDWIQGTK</sequence>
<organismHost>
    <name type="scientific">Bos taurus</name>
    <name type="common">Bovine</name>
    <dbReference type="NCBI Taxonomy" id="9913"/>
</organismHost>
<feature type="chain" id="PRO_0000085473" description="Protein Rev">
    <location>
        <begin position="1"/>
        <end position="186"/>
    </location>
</feature>
<feature type="region of interest" description="Disordered" evidence="3">
    <location>
        <begin position="1"/>
        <end position="22"/>
    </location>
</feature>
<feature type="region of interest" description="Disordered" evidence="3">
    <location>
        <begin position="44"/>
        <end position="79"/>
    </location>
</feature>
<feature type="region of interest" description="Disordered" evidence="3">
    <location>
        <begin position="121"/>
        <end position="142"/>
    </location>
</feature>
<feature type="coiled-coil region" evidence="2">
    <location>
        <begin position="85"/>
        <end position="120"/>
    </location>
</feature>
<feature type="short sequence motif" description="Nuclear localization signal and RNA-binding (RRE)" evidence="1">
    <location>
        <begin position="73"/>
        <end position="97"/>
    </location>
</feature>
<feature type="short sequence motif" description="Nuclear export signal" evidence="1">
    <location>
        <begin position="102"/>
        <end position="115"/>
    </location>
</feature>
<feature type="compositionally biased region" description="Basic and acidic residues" evidence="3">
    <location>
        <begin position="1"/>
        <end position="16"/>
    </location>
</feature>
<feature type="compositionally biased region" description="Polar residues" evidence="3">
    <location>
        <begin position="128"/>
        <end position="139"/>
    </location>
</feature>
<feature type="sequence variant" description="In strain: Isolate R29-Nadin.">
    <original>G</original>
    <variation>E</variation>
    <location>
        <position position="14"/>
    </location>
</feature>
<feature type="sequence variant" description="In strain: Isolate R29-Nadin.">
    <original>E</original>
    <variation>K</variation>
    <location>
        <position position="24"/>
    </location>
</feature>
<feature type="sequence variant" description="In strain: Isolate R29-Nadin.">
    <original>E</original>
    <variation>K</variation>
    <location>
        <position position="57"/>
    </location>
</feature>
<feature type="sequence variant" description="In strain: Isolate R29-Nadin.">
    <original>G</original>
    <variation>D</variation>
    <location>
        <position position="63"/>
    </location>
</feature>
<feature type="sequence variant" description="In strain: Isolate R29-Nadin.">
    <original>E</original>
    <variation>K</variation>
    <location>
        <position position="113"/>
    </location>
</feature>
<keyword id="KW-0175">Coiled coil</keyword>
<keyword id="KW-1035">Host cytoplasm</keyword>
<keyword id="KW-1048">Host nucleus</keyword>
<keyword id="KW-0509">mRNA transport</keyword>
<keyword id="KW-0597">Phosphoprotein</keyword>
<keyword id="KW-0694">RNA-binding</keyword>
<keyword id="KW-0813">Transport</keyword>
<reference key="1">
    <citation type="journal article" date="1990" name="Virology">
        <title>Nucleotide sequence and genome organization of biologically active proviruses of the bovine immunodeficiency-like virus.</title>
        <authorList>
            <person name="Garvey K.J."/>
            <person name="Oberste M.S."/>
            <person name="Elser J.E."/>
            <person name="Braun M.J."/>
            <person name="Gonda M.A."/>
        </authorList>
    </citation>
    <scope>NUCLEOTIDE SEQUENCE [GENOMIC RNA]</scope>
    <source>
        <strain>Isolate R29-106</strain>
        <strain>Isolate R29-127</strain>
    </source>
</reference>
<reference key="2">
    <citation type="journal article" date="1991" name="J. Virol.">
        <title>Analysis of the transcription pattern and mapping of the putative rev and env splice junctions of bovine immunodeficiency-like virus.</title>
        <authorList>
            <person name="Oberste M.S."/>
            <person name="Greenwood J.D."/>
            <person name="Gonda M.A."/>
        </authorList>
    </citation>
    <scope>NUCLEOTIDE SEQUENCE [MRNA]</scope>
</reference>
<reference key="3">
    <citation type="submission" date="1992-10" db="EMBL/GenBank/DDBJ databases">
        <title>Isolation and characterization of cDNAs encoding rev and tat of bovine immunodeficiency-like virus.</title>
        <authorList>
            <person name="Nadin-Davis S.A."/>
            <person name="Chang S.C."/>
            <person name="Roth J.A."/>
            <person name="Carpenter S."/>
        </authorList>
    </citation>
    <scope>NUCLEOTIDE SEQUENCE [MRNA]</scope>
    <source>
        <strain>Isolate R29-Nadin</strain>
    </source>
</reference>
<reference key="4">
    <citation type="journal article" date="1993" name="J. Virol.">
        <title>Characterization of bovine immunodeficiency virus rev cDNAs and identification and subcellular localization of the Rev protein.</title>
        <authorList>
            <person name="Oberste M.S."/>
            <person name="Williamson J.C."/>
            <person name="Greenwood J.D."/>
            <person name="Nagashima K."/>
            <person name="Copeland T.D."/>
            <person name="Gonda M.A."/>
        </authorList>
    </citation>
    <scope>PHOSPHORYLATION</scope>
    <scope>SUBCELLULAR LOCATION</scope>
</reference>
<evidence type="ECO:0000250" key="1"/>
<evidence type="ECO:0000255" key="2"/>
<evidence type="ECO:0000256" key="3">
    <source>
        <dbReference type="SAM" id="MobiDB-lite"/>
    </source>
</evidence>
<evidence type="ECO:0000269" key="4">
    <source>
    </source>
</evidence>
<gene>
    <name type="primary">rev</name>
</gene>
<organism>
    <name type="scientific">Bovine immunodeficiency virus (strain R29)</name>
    <name type="common">BIV</name>
    <name type="synonym">Bovine immunodeficiency-like virus</name>
    <dbReference type="NCBI Taxonomy" id="417296"/>
    <lineage>
        <taxon>Viruses</taxon>
        <taxon>Riboviria</taxon>
        <taxon>Pararnavirae</taxon>
        <taxon>Artverviricota</taxon>
        <taxon>Revtraviricetes</taxon>
        <taxon>Ortervirales</taxon>
        <taxon>Retroviridae</taxon>
        <taxon>Orthoretrovirinae</taxon>
        <taxon>Lentivirus</taxon>
        <taxon>Bovine immunodeficiency virus</taxon>
    </lineage>
</organism>